<keyword id="KW-0175">Coiled coil</keyword>
<keyword id="KW-0539">Nucleus</keyword>
<keyword id="KW-1185">Reference proteome</keyword>
<keyword id="KW-0687">Ribonucleoprotein</keyword>
<keyword id="KW-0690">Ribosome biogenesis</keyword>
<keyword id="KW-0698">rRNA processing</keyword>
<proteinExistence type="inferred from homology"/>
<dbReference type="EMBL" id="CH408078">
    <property type="protein sequence ID" value="EEQ38346.1"/>
    <property type="molecule type" value="Genomic_DNA"/>
</dbReference>
<dbReference type="RefSeq" id="XP_002617028.1">
    <property type="nucleotide sequence ID" value="XM_002616982.1"/>
</dbReference>
<dbReference type="SMR" id="C4Y4A0"/>
<dbReference type="FunCoup" id="C4Y4A0">
    <property type="interactions" value="559"/>
</dbReference>
<dbReference type="STRING" id="306902.C4Y4A0"/>
<dbReference type="GeneID" id="8498083"/>
<dbReference type="KEGG" id="clu:CLUG_02472"/>
<dbReference type="VEuPathDB" id="FungiDB:CLUG_02472"/>
<dbReference type="HOGENOM" id="CLU_048802_3_0_1"/>
<dbReference type="InParanoid" id="C4Y4A0"/>
<dbReference type="OMA" id="ERKEMPW"/>
<dbReference type="OrthoDB" id="120802at4891"/>
<dbReference type="Proteomes" id="UP000007703">
    <property type="component" value="Unassembled WGS sequence"/>
</dbReference>
<dbReference type="GO" id="GO:0030686">
    <property type="term" value="C:90S preribosome"/>
    <property type="evidence" value="ECO:0007669"/>
    <property type="project" value="EnsemblFungi"/>
</dbReference>
<dbReference type="GO" id="GO:0005730">
    <property type="term" value="C:nucleolus"/>
    <property type="evidence" value="ECO:0007669"/>
    <property type="project" value="UniProtKB-SubCell"/>
</dbReference>
<dbReference type="GO" id="GO:0032040">
    <property type="term" value="C:small-subunit processome"/>
    <property type="evidence" value="ECO:0007669"/>
    <property type="project" value="EnsemblFungi"/>
</dbReference>
<dbReference type="GO" id="GO:0000462">
    <property type="term" value="P:maturation of SSU-rRNA from tricistronic rRNA transcript (SSU-rRNA, 5.8S rRNA, LSU-rRNA)"/>
    <property type="evidence" value="ECO:0007669"/>
    <property type="project" value="EnsemblFungi"/>
</dbReference>
<dbReference type="InterPro" id="IPR009292">
    <property type="entry name" value="RRP36"/>
</dbReference>
<dbReference type="PANTHER" id="PTHR21738">
    <property type="entry name" value="RIBOSOMAL RNA PROCESSING PROTEIN 36 HOMOLOG"/>
    <property type="match status" value="1"/>
</dbReference>
<dbReference type="PANTHER" id="PTHR21738:SF0">
    <property type="entry name" value="RIBOSOMAL RNA PROCESSING PROTEIN 36 HOMOLOG"/>
    <property type="match status" value="1"/>
</dbReference>
<dbReference type="Pfam" id="PF06102">
    <property type="entry name" value="RRP36"/>
    <property type="match status" value="1"/>
</dbReference>
<organism>
    <name type="scientific">Clavispora lusitaniae (strain ATCC 42720)</name>
    <name type="common">Yeast</name>
    <name type="synonym">Candida lusitaniae</name>
    <dbReference type="NCBI Taxonomy" id="306902"/>
    <lineage>
        <taxon>Eukaryota</taxon>
        <taxon>Fungi</taxon>
        <taxon>Dikarya</taxon>
        <taxon>Ascomycota</taxon>
        <taxon>Saccharomycotina</taxon>
        <taxon>Pichiomycetes</taxon>
        <taxon>Metschnikowiaceae</taxon>
        <taxon>Clavispora</taxon>
    </lineage>
</organism>
<reference key="1">
    <citation type="journal article" date="2009" name="Nature">
        <title>Evolution of pathogenicity and sexual reproduction in eight Candida genomes.</title>
        <authorList>
            <person name="Butler G."/>
            <person name="Rasmussen M.D."/>
            <person name="Lin M.F."/>
            <person name="Santos M.A.S."/>
            <person name="Sakthikumar S."/>
            <person name="Munro C.A."/>
            <person name="Rheinbay E."/>
            <person name="Grabherr M."/>
            <person name="Forche A."/>
            <person name="Reedy J.L."/>
            <person name="Agrafioti I."/>
            <person name="Arnaud M.B."/>
            <person name="Bates S."/>
            <person name="Brown A.J.P."/>
            <person name="Brunke S."/>
            <person name="Costanzo M.C."/>
            <person name="Fitzpatrick D.A."/>
            <person name="de Groot P.W.J."/>
            <person name="Harris D."/>
            <person name="Hoyer L.L."/>
            <person name="Hube B."/>
            <person name="Klis F.M."/>
            <person name="Kodira C."/>
            <person name="Lennard N."/>
            <person name="Logue M.E."/>
            <person name="Martin R."/>
            <person name="Neiman A.M."/>
            <person name="Nikolaou E."/>
            <person name="Quail M.A."/>
            <person name="Quinn J."/>
            <person name="Santos M.C."/>
            <person name="Schmitzberger F.F."/>
            <person name="Sherlock G."/>
            <person name="Shah P."/>
            <person name="Silverstein K.A.T."/>
            <person name="Skrzypek M.S."/>
            <person name="Soll D."/>
            <person name="Staggs R."/>
            <person name="Stansfield I."/>
            <person name="Stumpf M.P.H."/>
            <person name="Sudbery P.E."/>
            <person name="Srikantha T."/>
            <person name="Zeng Q."/>
            <person name="Berman J."/>
            <person name="Berriman M."/>
            <person name="Heitman J."/>
            <person name="Gow N.A.R."/>
            <person name="Lorenz M.C."/>
            <person name="Birren B.W."/>
            <person name="Kellis M."/>
            <person name="Cuomo C.A."/>
        </authorList>
    </citation>
    <scope>NUCLEOTIDE SEQUENCE [LARGE SCALE GENOMIC DNA]</scope>
    <source>
        <strain>ATCC 42720</strain>
    </source>
</reference>
<name>RRP36_CLAL4</name>
<evidence type="ECO:0000250" key="1"/>
<evidence type="ECO:0000255" key="2"/>
<evidence type="ECO:0000256" key="3">
    <source>
        <dbReference type="SAM" id="MobiDB-lite"/>
    </source>
</evidence>
<evidence type="ECO:0000305" key="4"/>
<comment type="function">
    <text evidence="1">Component of the 90S pre-ribosome involved in the maturation of rRNAs. Required for early cleavages of the pre-RNAs in the 40S ribosomal subunit maturation pathway (By similarity).</text>
</comment>
<comment type="subunit">
    <text evidence="1">Associates with 90S and pre-40S pre-ribosomal particles.</text>
</comment>
<comment type="subcellular location">
    <subcellularLocation>
        <location evidence="1">Nucleus</location>
        <location evidence="1">Nucleolus</location>
    </subcellularLocation>
</comment>
<comment type="similarity">
    <text evidence="4">Belongs to the RRP36 family.</text>
</comment>
<gene>
    <name type="primary">RRP36</name>
    <name type="ORF">CLUG_02472</name>
</gene>
<accession>C4Y4A0</accession>
<protein>
    <recommendedName>
        <fullName>rRNA biogenesis protein RRP36</fullName>
    </recommendedName>
    <alternativeName>
        <fullName>Ribosomal RNA-processing protein 36</fullName>
    </alternativeName>
</protein>
<sequence>MSTHRFKPSYDESESEDDYLGSVLDNKDESDDDFSSLSFGALNSAQKKLREQSETQRPPSRKSSKNQESDDSDSDSDDQFFEDKKSKKTKDKKSKRSKHAPAEASFKRPVPKIREIPGLKSAKDSTLYTDIRFDAAYGKADLNRVRKDYAFLDELRQKEIAEMKAVLKNDKLRRKMSQREIEDLELQVKSLQSRLDTLKNRDLSTKIISDHKKQQMEKMKKGEQVNPYYLKKSEQRKMIQKAKFETMKASQREKVMERKRKRKLGREFRQLEFREPQR</sequence>
<feature type="chain" id="PRO_0000397628" description="rRNA biogenesis protein RRP36">
    <location>
        <begin position="1"/>
        <end position="278"/>
    </location>
</feature>
<feature type="region of interest" description="Disordered" evidence="3">
    <location>
        <begin position="1"/>
        <end position="118"/>
    </location>
</feature>
<feature type="coiled-coil region" evidence="2">
    <location>
        <begin position="165"/>
        <end position="204"/>
    </location>
</feature>
<feature type="compositionally biased region" description="Acidic residues" evidence="3">
    <location>
        <begin position="69"/>
        <end position="80"/>
    </location>
</feature>
<feature type="compositionally biased region" description="Basic residues" evidence="3">
    <location>
        <begin position="86"/>
        <end position="99"/>
    </location>
</feature>